<feature type="chain" id="PRO_0000361880" description="Kynurenine formamidase">
    <location>
        <begin position="1"/>
        <end position="241"/>
    </location>
</feature>
<feature type="short sequence motif" description="HGGXW">
    <location>
        <begin position="23"/>
        <end position="27"/>
    </location>
</feature>
<feature type="active site" description="Nucleophile" evidence="1">
    <location>
        <position position="95"/>
    </location>
</feature>
<feature type="active site" evidence="1">
    <location>
        <position position="191"/>
    </location>
</feature>
<feature type="active site" evidence="1">
    <location>
        <position position="223"/>
    </location>
</feature>
<sequence>MQRDYTATEVFQESGPDAIVYLHGGAWIDVRNSPRDFAELAARVREDAPLASQYAVTYRLSPEVQHPVHVADCVEHISQLIVEKGIRKLHLLGHSVGATLCWQILTALPGDRRYPEGPDFAMKLALVRSSLAHVFLVDGIYSLRALLEEYPDYDYFVNKAFKSLKDFEDPSESAERISAGPILHVIHSYKDELLTLKQTQYLTAVLTAHQIPYKLYVDDLGLHEDVYRNEKVAAYIVAQLP</sequence>
<gene>
    <name evidence="1" type="primary">BNA7</name>
    <name type="ordered locus">ADR190W</name>
</gene>
<dbReference type="EC" id="3.5.1.9" evidence="1"/>
<dbReference type="EMBL" id="AE016817">
    <property type="protein sequence ID" value="AAS52110.1"/>
    <property type="molecule type" value="Genomic_DNA"/>
</dbReference>
<dbReference type="RefSeq" id="NP_984286.1">
    <property type="nucleotide sequence ID" value="NM_209639.1"/>
</dbReference>
<dbReference type="SMR" id="Q759T3"/>
<dbReference type="FunCoup" id="Q759T3">
    <property type="interactions" value="135"/>
</dbReference>
<dbReference type="STRING" id="284811.Q759T3"/>
<dbReference type="ESTHER" id="ashgo-bna7">
    <property type="family name" value="Kynurenine-formamidase"/>
</dbReference>
<dbReference type="EnsemblFungi" id="AAS52110">
    <property type="protein sequence ID" value="AAS52110"/>
    <property type="gene ID" value="AGOS_ADR190W"/>
</dbReference>
<dbReference type="GeneID" id="4620448"/>
<dbReference type="KEGG" id="ago:AGOS_ADR190W"/>
<dbReference type="eggNOG" id="ENOG502S28Q">
    <property type="taxonomic scope" value="Eukaryota"/>
</dbReference>
<dbReference type="HOGENOM" id="CLU_016852_1_0_1"/>
<dbReference type="InParanoid" id="Q759T3"/>
<dbReference type="OMA" id="DHYDIMK"/>
<dbReference type="OrthoDB" id="420264at2759"/>
<dbReference type="UniPathway" id="UPA00333">
    <property type="reaction ID" value="UER00454"/>
</dbReference>
<dbReference type="Proteomes" id="UP000000591">
    <property type="component" value="Chromosome IV"/>
</dbReference>
<dbReference type="GO" id="GO:0004061">
    <property type="term" value="F:arylformamidase activity"/>
    <property type="evidence" value="ECO:0000318"/>
    <property type="project" value="GO_Central"/>
</dbReference>
<dbReference type="GO" id="GO:0034354">
    <property type="term" value="P:'de novo' NAD biosynthetic process from L-tryptophan"/>
    <property type="evidence" value="ECO:0007669"/>
    <property type="project" value="UniProtKB-UniRule"/>
</dbReference>
<dbReference type="GO" id="GO:0019441">
    <property type="term" value="P:L-tryptophan catabolic process to kynurenine"/>
    <property type="evidence" value="ECO:0007669"/>
    <property type="project" value="UniProtKB-UniRule"/>
</dbReference>
<dbReference type="GO" id="GO:0030307">
    <property type="term" value="P:positive regulation of cell growth"/>
    <property type="evidence" value="ECO:0007669"/>
    <property type="project" value="EnsemblFungi"/>
</dbReference>
<dbReference type="Gene3D" id="3.40.50.1820">
    <property type="entry name" value="alpha/beta hydrolase"/>
    <property type="match status" value="1"/>
</dbReference>
<dbReference type="HAMAP" id="MF_03014">
    <property type="entry name" value="KFase"/>
    <property type="match status" value="1"/>
</dbReference>
<dbReference type="InterPro" id="IPR013094">
    <property type="entry name" value="AB_hydrolase_3"/>
</dbReference>
<dbReference type="InterPro" id="IPR029058">
    <property type="entry name" value="AB_hydrolase_fold"/>
</dbReference>
<dbReference type="InterPro" id="IPR050300">
    <property type="entry name" value="GDXG_lipolytic_enzyme"/>
</dbReference>
<dbReference type="InterPro" id="IPR027519">
    <property type="entry name" value="KFase_ver/fungi-typ"/>
</dbReference>
<dbReference type="PANTHER" id="PTHR48081">
    <property type="entry name" value="AB HYDROLASE SUPERFAMILY PROTEIN C4A8.06C"/>
    <property type="match status" value="1"/>
</dbReference>
<dbReference type="PANTHER" id="PTHR48081:SF33">
    <property type="entry name" value="KYNURENINE FORMAMIDASE"/>
    <property type="match status" value="1"/>
</dbReference>
<dbReference type="Pfam" id="PF07859">
    <property type="entry name" value="Abhydrolase_3"/>
    <property type="match status" value="1"/>
</dbReference>
<dbReference type="SUPFAM" id="SSF53474">
    <property type="entry name" value="alpha/beta-Hydrolases"/>
    <property type="match status" value="1"/>
</dbReference>
<proteinExistence type="inferred from homology"/>
<protein>
    <recommendedName>
        <fullName evidence="1">Kynurenine formamidase</fullName>
        <shortName evidence="1">KFA</shortName>
        <shortName evidence="1">KFase</shortName>
        <ecNumber evidence="1">3.5.1.9</ecNumber>
    </recommendedName>
    <alternativeName>
        <fullName evidence="1">Arylformamidase</fullName>
    </alternativeName>
    <alternativeName>
        <fullName evidence="1">N-formylkynurenine formamidase</fullName>
        <shortName evidence="1">FKF</shortName>
    </alternativeName>
</protein>
<evidence type="ECO:0000255" key="1">
    <source>
        <dbReference type="HAMAP-Rule" id="MF_03014"/>
    </source>
</evidence>
<comment type="function">
    <text evidence="1">Catalyzes the hydrolysis of N-formyl-L-kynurenine to L-kynurenine, the second step in the kynurenine pathway of tryptophan degradation. Kynurenine may be further oxidized to nicotinic acid, NAD(H) and NADP(H). Required for elimination of toxic metabolites.</text>
</comment>
<comment type="catalytic activity">
    <reaction evidence="1">
        <text>N-formyl-L-kynurenine + H2O = L-kynurenine + formate + H(+)</text>
        <dbReference type="Rhea" id="RHEA:13009"/>
        <dbReference type="ChEBI" id="CHEBI:15377"/>
        <dbReference type="ChEBI" id="CHEBI:15378"/>
        <dbReference type="ChEBI" id="CHEBI:15740"/>
        <dbReference type="ChEBI" id="CHEBI:57959"/>
        <dbReference type="ChEBI" id="CHEBI:58629"/>
        <dbReference type="EC" id="3.5.1.9"/>
    </reaction>
</comment>
<comment type="pathway">
    <text evidence="1">Amino-acid degradation; L-tryptophan degradation via kynurenine pathway; L-kynurenine from L-tryptophan: step 2/2.</text>
</comment>
<comment type="subunit">
    <text evidence="1">Homodimer.</text>
</comment>
<comment type="domain">
    <text evidence="1">The main chain amide nitrogen atoms of the second glycine and its adjacent residue in the HGGXW motif define the oxyanion hole, and stabilize the oxyanion that forms during the nucleophilic attack by the catalytic serine during substrate cleavage.</text>
</comment>
<comment type="similarity">
    <text evidence="1">Belongs to the kynurenine formamidase family.</text>
</comment>
<reference key="1">
    <citation type="journal article" date="2004" name="Science">
        <title>The Ashbya gossypii genome as a tool for mapping the ancient Saccharomyces cerevisiae genome.</title>
        <authorList>
            <person name="Dietrich F.S."/>
            <person name="Voegeli S."/>
            <person name="Brachat S."/>
            <person name="Lerch A."/>
            <person name="Gates K."/>
            <person name="Steiner S."/>
            <person name="Mohr C."/>
            <person name="Poehlmann R."/>
            <person name="Luedi P."/>
            <person name="Choi S."/>
            <person name="Wing R.A."/>
            <person name="Flavier A."/>
            <person name="Gaffney T.D."/>
            <person name="Philippsen P."/>
        </authorList>
    </citation>
    <scope>NUCLEOTIDE SEQUENCE [LARGE SCALE GENOMIC DNA]</scope>
    <source>
        <strain>ATCC 10895 / CBS 109.51 / FGSC 9923 / NRRL Y-1056</strain>
    </source>
</reference>
<reference key="2">
    <citation type="journal article" date="2013" name="G3 (Bethesda)">
        <title>Genomes of Ashbya fungi isolated from insects reveal four mating-type loci, numerous translocations, lack of transposons, and distinct gene duplications.</title>
        <authorList>
            <person name="Dietrich F.S."/>
            <person name="Voegeli S."/>
            <person name="Kuo S."/>
            <person name="Philippsen P."/>
        </authorList>
    </citation>
    <scope>GENOME REANNOTATION</scope>
    <source>
        <strain>ATCC 10895 / CBS 109.51 / FGSC 9923 / NRRL Y-1056</strain>
    </source>
</reference>
<keyword id="KW-0378">Hydrolase</keyword>
<keyword id="KW-1185">Reference proteome</keyword>
<keyword id="KW-0823">Tryptophan catabolism</keyword>
<name>KFA_EREGS</name>
<accession>Q759T3</accession>
<organism>
    <name type="scientific">Eremothecium gossypii (strain ATCC 10895 / CBS 109.51 / FGSC 9923 / NRRL Y-1056)</name>
    <name type="common">Yeast</name>
    <name type="synonym">Ashbya gossypii</name>
    <dbReference type="NCBI Taxonomy" id="284811"/>
    <lineage>
        <taxon>Eukaryota</taxon>
        <taxon>Fungi</taxon>
        <taxon>Dikarya</taxon>
        <taxon>Ascomycota</taxon>
        <taxon>Saccharomycotina</taxon>
        <taxon>Saccharomycetes</taxon>
        <taxon>Saccharomycetales</taxon>
        <taxon>Saccharomycetaceae</taxon>
        <taxon>Eremothecium</taxon>
    </lineage>
</organism>